<protein>
    <recommendedName>
        <fullName evidence="1">tRNA-modifying protein YgfZ</fullName>
    </recommendedName>
</protein>
<gene>
    <name evidence="1" type="primary">ygfZ</name>
    <name type="ordered locus">SEN2891</name>
</gene>
<dbReference type="EMBL" id="AM933172">
    <property type="protein sequence ID" value="CAR34469.1"/>
    <property type="molecule type" value="Genomic_DNA"/>
</dbReference>
<dbReference type="RefSeq" id="WP_000874176.1">
    <property type="nucleotide sequence ID" value="NC_011294.1"/>
</dbReference>
<dbReference type="SMR" id="B5QXH5"/>
<dbReference type="KEGG" id="set:SEN2891"/>
<dbReference type="HOGENOM" id="CLU_007884_6_1_6"/>
<dbReference type="Proteomes" id="UP000000613">
    <property type="component" value="Chromosome"/>
</dbReference>
<dbReference type="GO" id="GO:0005737">
    <property type="term" value="C:cytoplasm"/>
    <property type="evidence" value="ECO:0007669"/>
    <property type="project" value="UniProtKB-SubCell"/>
</dbReference>
<dbReference type="GO" id="GO:0005542">
    <property type="term" value="F:folic acid binding"/>
    <property type="evidence" value="ECO:0007669"/>
    <property type="project" value="UniProtKB-UniRule"/>
</dbReference>
<dbReference type="GO" id="GO:0016226">
    <property type="term" value="P:iron-sulfur cluster assembly"/>
    <property type="evidence" value="ECO:0007669"/>
    <property type="project" value="TreeGrafter"/>
</dbReference>
<dbReference type="GO" id="GO:0009451">
    <property type="term" value="P:RNA modification"/>
    <property type="evidence" value="ECO:0007669"/>
    <property type="project" value="InterPro"/>
</dbReference>
<dbReference type="GO" id="GO:0008033">
    <property type="term" value="P:tRNA processing"/>
    <property type="evidence" value="ECO:0007669"/>
    <property type="project" value="UniProtKB-UniRule"/>
</dbReference>
<dbReference type="FunFam" id="2.40.30.160:FF:000001">
    <property type="entry name" value="tRNA-modifying protein YgfZ"/>
    <property type="match status" value="1"/>
</dbReference>
<dbReference type="FunFam" id="3.30.70.1400:FF:000002">
    <property type="entry name" value="tRNA-modifying protein YgfZ"/>
    <property type="match status" value="1"/>
</dbReference>
<dbReference type="FunFam" id="3.30.70.1630:FF:000001">
    <property type="entry name" value="tRNA-modifying protein YgfZ"/>
    <property type="match status" value="1"/>
</dbReference>
<dbReference type="Gene3D" id="2.40.30.160">
    <property type="match status" value="1"/>
</dbReference>
<dbReference type="Gene3D" id="3.30.70.1630">
    <property type="match status" value="1"/>
</dbReference>
<dbReference type="Gene3D" id="3.30.70.1400">
    <property type="entry name" value="Aminomethyltransferase beta-barrel domains"/>
    <property type="match status" value="1"/>
</dbReference>
<dbReference type="HAMAP" id="MF_01175">
    <property type="entry name" value="tRNA_modifying_YgfZ"/>
    <property type="match status" value="1"/>
</dbReference>
<dbReference type="InterPro" id="IPR006222">
    <property type="entry name" value="GCV_T_N"/>
</dbReference>
<dbReference type="InterPro" id="IPR029043">
    <property type="entry name" value="GcvT/YgfZ_C"/>
</dbReference>
<dbReference type="InterPro" id="IPR023758">
    <property type="entry name" value="tRNA-modifying_YgfZ"/>
</dbReference>
<dbReference type="InterPro" id="IPR045179">
    <property type="entry name" value="YgfZ/GcvT"/>
</dbReference>
<dbReference type="InterPro" id="IPR017703">
    <property type="entry name" value="YgfZ/GcvT_CS"/>
</dbReference>
<dbReference type="InterPro" id="IPR048451">
    <property type="entry name" value="YgfZ_barrel"/>
</dbReference>
<dbReference type="NCBIfam" id="NF007110">
    <property type="entry name" value="PRK09559.1"/>
    <property type="match status" value="1"/>
</dbReference>
<dbReference type="NCBIfam" id="TIGR03317">
    <property type="entry name" value="ygfZ_signature"/>
    <property type="match status" value="1"/>
</dbReference>
<dbReference type="PANTHER" id="PTHR22602">
    <property type="entry name" value="TRANSFERASE CAF17, MITOCHONDRIAL-RELATED"/>
    <property type="match status" value="1"/>
</dbReference>
<dbReference type="PANTHER" id="PTHR22602:SF0">
    <property type="entry name" value="TRANSFERASE CAF17, MITOCHONDRIAL-RELATED"/>
    <property type="match status" value="1"/>
</dbReference>
<dbReference type="Pfam" id="PF01571">
    <property type="entry name" value="GCV_T"/>
    <property type="match status" value="1"/>
</dbReference>
<dbReference type="Pfam" id="PF21130">
    <property type="entry name" value="YgfZ_barrel"/>
    <property type="match status" value="1"/>
</dbReference>
<dbReference type="SUPFAM" id="SSF101790">
    <property type="entry name" value="Aminomethyltransferase beta-barrel domain"/>
    <property type="match status" value="1"/>
</dbReference>
<dbReference type="SUPFAM" id="SSF103025">
    <property type="entry name" value="Folate-binding domain"/>
    <property type="match status" value="1"/>
</dbReference>
<proteinExistence type="inferred from homology"/>
<organism>
    <name type="scientific">Salmonella enteritidis PT4 (strain P125109)</name>
    <dbReference type="NCBI Taxonomy" id="550537"/>
    <lineage>
        <taxon>Bacteria</taxon>
        <taxon>Pseudomonadati</taxon>
        <taxon>Pseudomonadota</taxon>
        <taxon>Gammaproteobacteria</taxon>
        <taxon>Enterobacterales</taxon>
        <taxon>Enterobacteriaceae</taxon>
        <taxon>Salmonella</taxon>
    </lineage>
</organism>
<name>YGFZ_SALEP</name>
<comment type="function">
    <text evidence="1">Folate-binding protein involved in regulating the level of ATP-DnaA and in the modification of some tRNAs. It is probably a key factor in regulatory networks that act via tRNA modification, such as initiation of chromosomal replication.</text>
</comment>
<comment type="subcellular location">
    <subcellularLocation>
        <location evidence="1">Cytoplasm</location>
    </subcellularLocation>
</comment>
<comment type="similarity">
    <text evidence="1">Belongs to the tRNA-modifying YgfZ family.</text>
</comment>
<feature type="chain" id="PRO_1000138081" description="tRNA-modifying protein YgfZ">
    <location>
        <begin position="1"/>
        <end position="326"/>
    </location>
</feature>
<feature type="binding site" evidence="1">
    <location>
        <position position="27"/>
    </location>
    <ligand>
        <name>folate</name>
        <dbReference type="ChEBI" id="CHEBI:62501"/>
    </ligand>
</feature>
<feature type="binding site" evidence="1">
    <location>
        <position position="189"/>
    </location>
    <ligand>
        <name>folate</name>
        <dbReference type="ChEBI" id="CHEBI:62501"/>
    </ligand>
</feature>
<keyword id="KW-0963">Cytoplasm</keyword>
<keyword id="KW-0290">Folate-binding</keyword>
<keyword id="KW-0819">tRNA processing</keyword>
<reference key="1">
    <citation type="journal article" date="2008" name="Genome Res.">
        <title>Comparative genome analysis of Salmonella enteritidis PT4 and Salmonella gallinarum 287/91 provides insights into evolutionary and host adaptation pathways.</title>
        <authorList>
            <person name="Thomson N.R."/>
            <person name="Clayton D.J."/>
            <person name="Windhorst D."/>
            <person name="Vernikos G."/>
            <person name="Davidson S."/>
            <person name="Churcher C."/>
            <person name="Quail M.A."/>
            <person name="Stevens M."/>
            <person name="Jones M.A."/>
            <person name="Watson M."/>
            <person name="Barron A."/>
            <person name="Layton A."/>
            <person name="Pickard D."/>
            <person name="Kingsley R.A."/>
            <person name="Bignell A."/>
            <person name="Clark L."/>
            <person name="Harris B."/>
            <person name="Ormond D."/>
            <person name="Abdellah Z."/>
            <person name="Brooks K."/>
            <person name="Cherevach I."/>
            <person name="Chillingworth T."/>
            <person name="Woodward J."/>
            <person name="Norberczak H."/>
            <person name="Lord A."/>
            <person name="Arrowsmith C."/>
            <person name="Jagels K."/>
            <person name="Moule S."/>
            <person name="Mungall K."/>
            <person name="Saunders M."/>
            <person name="Whitehead S."/>
            <person name="Chabalgoity J.A."/>
            <person name="Maskell D."/>
            <person name="Humphreys T."/>
            <person name="Roberts M."/>
            <person name="Barrow P.A."/>
            <person name="Dougan G."/>
            <person name="Parkhill J."/>
        </authorList>
    </citation>
    <scope>NUCLEOTIDE SEQUENCE [LARGE SCALE GENOMIC DNA]</scope>
    <source>
        <strain>P125109</strain>
    </source>
</reference>
<accession>B5QXH5</accession>
<evidence type="ECO:0000255" key="1">
    <source>
        <dbReference type="HAMAP-Rule" id="MF_01175"/>
    </source>
</evidence>
<sequence length="326" mass="36015">MAFISFPPRHPSSSARLPLTLIALDDWALSTITGVDSEKYIQGQVTADVSQMTEQQHLLAAHCDAKGKMWSTLRLFRERDGFAWIERRSVREAQLTELKKYAVFSKVVIAPDDERVLLGVAGFQARAALANVFSELPNSENQVVRDGASTLLWFEHPAERFLLVTDVATANMLTEKLHGEAELNNSQQWLALDIEAGIPVIDAANSGQFIPQATNLQALGGISFKKGCYTGQEMVARAKFRGANKRALWLLAGKASRVPEAGEDLELQMGENWRRTGAILAATQLDDGQLLVQAVMNNDLEAESVFRVRDDANTLHIVPLPYSLEE</sequence>